<comment type="function">
    <text evidence="2">Destroys superoxide anion radicals which are normally produced within the cells and which are toxic to biological systems. Catalyzes the dismutation of superoxide anion radicals into O2 and H2O2 by successive reduction and oxidation of the transition metal ion at the active site.</text>
</comment>
<comment type="catalytic activity">
    <reaction evidence="2">
        <text>2 superoxide + 2 H(+) = H2O2 + O2</text>
        <dbReference type="Rhea" id="RHEA:20696"/>
        <dbReference type="ChEBI" id="CHEBI:15378"/>
        <dbReference type="ChEBI" id="CHEBI:15379"/>
        <dbReference type="ChEBI" id="CHEBI:16240"/>
        <dbReference type="ChEBI" id="CHEBI:18421"/>
        <dbReference type="EC" id="1.15.1.1"/>
    </reaction>
    <physiologicalReaction direction="left-to-right" evidence="2">
        <dbReference type="Rhea" id="RHEA:20697"/>
    </physiologicalReaction>
</comment>
<comment type="cofactor">
    <cofactor evidence="2">
        <name>Mn(2+)</name>
        <dbReference type="ChEBI" id="CHEBI:29035"/>
    </cofactor>
    <cofactor evidence="2">
        <name>Fe(3+)</name>
        <dbReference type="ChEBI" id="CHEBI:29034"/>
    </cofactor>
    <text evidence="2">Binds 1 Mn(2+) or Fe(3+) ion per subunit.</text>
</comment>
<comment type="subunit">
    <text evidence="1">Homodimer. Can also form a heterodimer with SodA (By similarity).</text>
</comment>
<comment type="similarity">
    <text evidence="3">Belongs to the iron/manganese superoxide dismutase family.</text>
</comment>
<gene>
    <name type="primary">sodM</name>
    <name type="ordered locus">MW0107</name>
</gene>
<accession>P66832</accession>
<accession>Q99X82</accession>
<protein>
    <recommendedName>
        <fullName>Superoxide dismutase [Mn/Fe] 2</fullName>
        <ecNumber evidence="2">1.15.1.1</ecNumber>
    </recommendedName>
</protein>
<name>SODM2_STAAW</name>
<proteinExistence type="inferred from homology"/>
<sequence>MAFKLPNLPYAYDALEPYIDQRTMEFHHDKHHNTYVTKLNATVEGTELEHQSLADMIANLDKVPEAMRMSVRNNGGGHFNHSLFWEILSPNSEEKGGVIDDIKAQWGTLDEFKNEFANKATTLFGSGWTWLVVNDGKLEIVTTPNQDNPLTEGKTPILLFDVWEHAYYLKYQNKRPDYMTAFWNIVNWKKVDELYQAAK</sequence>
<keyword id="KW-0408">Iron</keyword>
<keyword id="KW-0464">Manganese</keyword>
<keyword id="KW-0479">Metal-binding</keyword>
<keyword id="KW-0560">Oxidoreductase</keyword>
<keyword id="KW-0346">Stress response</keyword>
<evidence type="ECO:0000250" key="1"/>
<evidence type="ECO:0000250" key="2">
    <source>
        <dbReference type="UniProtKB" id="P80293"/>
    </source>
</evidence>
<evidence type="ECO:0000305" key="3"/>
<reference key="1">
    <citation type="journal article" date="2002" name="Lancet">
        <title>Genome and virulence determinants of high virulence community-acquired MRSA.</title>
        <authorList>
            <person name="Baba T."/>
            <person name="Takeuchi F."/>
            <person name="Kuroda M."/>
            <person name="Yuzawa H."/>
            <person name="Aoki K."/>
            <person name="Oguchi A."/>
            <person name="Nagai Y."/>
            <person name="Iwama N."/>
            <person name="Asano K."/>
            <person name="Naimi T."/>
            <person name="Kuroda H."/>
            <person name="Cui L."/>
            <person name="Yamamoto K."/>
            <person name="Hiramatsu K."/>
        </authorList>
    </citation>
    <scope>NUCLEOTIDE SEQUENCE [LARGE SCALE GENOMIC DNA]</scope>
    <source>
        <strain>MW2</strain>
    </source>
</reference>
<dbReference type="EC" id="1.15.1.1" evidence="2"/>
<dbReference type="EMBL" id="BA000033">
    <property type="protein sequence ID" value="BAB93972.1"/>
    <property type="molecule type" value="Genomic_DNA"/>
</dbReference>
<dbReference type="RefSeq" id="WP_000874681.1">
    <property type="nucleotide sequence ID" value="NC_003923.1"/>
</dbReference>
<dbReference type="SMR" id="P66832"/>
<dbReference type="KEGG" id="sam:MW0107"/>
<dbReference type="HOGENOM" id="CLU_031625_0_0_9"/>
<dbReference type="GO" id="GO:0005737">
    <property type="term" value="C:cytoplasm"/>
    <property type="evidence" value="ECO:0007669"/>
    <property type="project" value="TreeGrafter"/>
</dbReference>
<dbReference type="GO" id="GO:0046872">
    <property type="term" value="F:metal ion binding"/>
    <property type="evidence" value="ECO:0007669"/>
    <property type="project" value="UniProtKB-KW"/>
</dbReference>
<dbReference type="GO" id="GO:0004784">
    <property type="term" value="F:superoxide dismutase activity"/>
    <property type="evidence" value="ECO:0007669"/>
    <property type="project" value="UniProtKB-EC"/>
</dbReference>
<dbReference type="FunFam" id="1.10.287.990:FF:000001">
    <property type="entry name" value="Superoxide dismutase"/>
    <property type="match status" value="1"/>
</dbReference>
<dbReference type="FunFam" id="3.55.40.20:FF:000001">
    <property type="entry name" value="Superoxide dismutase"/>
    <property type="match status" value="1"/>
</dbReference>
<dbReference type="Gene3D" id="1.10.287.990">
    <property type="entry name" value="Fe,Mn superoxide dismutase (SOD) domain"/>
    <property type="match status" value="1"/>
</dbReference>
<dbReference type="Gene3D" id="3.55.40.20">
    <property type="entry name" value="Iron/manganese superoxide dismutase, C-terminal domain"/>
    <property type="match status" value="1"/>
</dbReference>
<dbReference type="InterPro" id="IPR001189">
    <property type="entry name" value="Mn/Fe_SOD"/>
</dbReference>
<dbReference type="InterPro" id="IPR019833">
    <property type="entry name" value="Mn/Fe_SOD_BS"/>
</dbReference>
<dbReference type="InterPro" id="IPR019832">
    <property type="entry name" value="Mn/Fe_SOD_C"/>
</dbReference>
<dbReference type="InterPro" id="IPR019831">
    <property type="entry name" value="Mn/Fe_SOD_N"/>
</dbReference>
<dbReference type="InterPro" id="IPR036324">
    <property type="entry name" value="Mn/Fe_SOD_N_sf"/>
</dbReference>
<dbReference type="InterPro" id="IPR036314">
    <property type="entry name" value="SOD_C_sf"/>
</dbReference>
<dbReference type="PANTHER" id="PTHR43595">
    <property type="entry name" value="37S RIBOSOMAL PROTEIN S26, MITOCHONDRIAL"/>
    <property type="match status" value="1"/>
</dbReference>
<dbReference type="PANTHER" id="PTHR43595:SF2">
    <property type="entry name" value="SMALL RIBOSOMAL SUBUNIT PROTEIN MS42"/>
    <property type="match status" value="1"/>
</dbReference>
<dbReference type="Pfam" id="PF02777">
    <property type="entry name" value="Sod_Fe_C"/>
    <property type="match status" value="1"/>
</dbReference>
<dbReference type="Pfam" id="PF00081">
    <property type="entry name" value="Sod_Fe_N"/>
    <property type="match status" value="1"/>
</dbReference>
<dbReference type="PIRSF" id="PIRSF000349">
    <property type="entry name" value="SODismutase"/>
    <property type="match status" value="1"/>
</dbReference>
<dbReference type="PRINTS" id="PR01703">
    <property type="entry name" value="MNSODISMTASE"/>
</dbReference>
<dbReference type="SUPFAM" id="SSF54719">
    <property type="entry name" value="Fe,Mn superoxide dismutase (SOD), C-terminal domain"/>
    <property type="match status" value="1"/>
</dbReference>
<dbReference type="SUPFAM" id="SSF46609">
    <property type="entry name" value="Fe,Mn superoxide dismutase (SOD), N-terminal domain"/>
    <property type="match status" value="1"/>
</dbReference>
<dbReference type="PROSITE" id="PS00088">
    <property type="entry name" value="SOD_MN"/>
    <property type="match status" value="1"/>
</dbReference>
<organism>
    <name type="scientific">Staphylococcus aureus (strain MW2)</name>
    <dbReference type="NCBI Taxonomy" id="196620"/>
    <lineage>
        <taxon>Bacteria</taxon>
        <taxon>Bacillati</taxon>
        <taxon>Bacillota</taxon>
        <taxon>Bacilli</taxon>
        <taxon>Bacillales</taxon>
        <taxon>Staphylococcaceae</taxon>
        <taxon>Staphylococcus</taxon>
    </lineage>
</organism>
<feature type="chain" id="PRO_0000160084" description="Superoxide dismutase [Mn/Fe] 2">
    <location>
        <begin position="1"/>
        <end position="199"/>
    </location>
</feature>
<feature type="binding site" evidence="2">
    <location>
        <position position="27"/>
    </location>
    <ligand>
        <name>Fe(3+)</name>
        <dbReference type="ChEBI" id="CHEBI:29034"/>
    </ligand>
</feature>
<feature type="binding site" evidence="2">
    <location>
        <position position="27"/>
    </location>
    <ligand>
        <name>Mn(2+)</name>
        <dbReference type="ChEBI" id="CHEBI:29035"/>
    </ligand>
</feature>
<feature type="binding site" evidence="2">
    <location>
        <position position="81"/>
    </location>
    <ligand>
        <name>Fe(3+)</name>
        <dbReference type="ChEBI" id="CHEBI:29034"/>
    </ligand>
</feature>
<feature type="binding site" evidence="2">
    <location>
        <position position="81"/>
    </location>
    <ligand>
        <name>Mn(2+)</name>
        <dbReference type="ChEBI" id="CHEBI:29035"/>
    </ligand>
</feature>
<feature type="binding site" evidence="2">
    <location>
        <position position="161"/>
    </location>
    <ligand>
        <name>Fe(3+)</name>
        <dbReference type="ChEBI" id="CHEBI:29034"/>
    </ligand>
</feature>
<feature type="binding site" evidence="2">
    <location>
        <position position="161"/>
    </location>
    <ligand>
        <name>Mn(2+)</name>
        <dbReference type="ChEBI" id="CHEBI:29035"/>
    </ligand>
</feature>
<feature type="binding site" evidence="2">
    <location>
        <position position="165"/>
    </location>
    <ligand>
        <name>Fe(3+)</name>
        <dbReference type="ChEBI" id="CHEBI:29034"/>
    </ligand>
</feature>
<feature type="binding site" evidence="2">
    <location>
        <position position="165"/>
    </location>
    <ligand>
        <name>Mn(2+)</name>
        <dbReference type="ChEBI" id="CHEBI:29035"/>
    </ligand>
</feature>